<keyword id="KW-0150">Chloroplast</keyword>
<keyword id="KW-0934">Plastid</keyword>
<keyword id="KW-0687">Ribonucleoprotein</keyword>
<keyword id="KW-0689">Ribosomal protein</keyword>
<keyword id="KW-0694">RNA-binding</keyword>
<keyword id="KW-0699">rRNA-binding</keyword>
<protein>
    <recommendedName>
        <fullName evidence="2">Large ribosomal subunit protein uL5c</fullName>
    </recommendedName>
    <alternativeName>
        <fullName>50S ribosomal protein L5, chloroplastic</fullName>
    </alternativeName>
</protein>
<name>RK5_PYRYE</name>
<gene>
    <name type="primary">rpl5</name>
</gene>
<proteinExistence type="inferred from homology"/>
<organism>
    <name type="scientific">Pyropia yezoensis</name>
    <name type="common">Susabi-nori</name>
    <name type="synonym">Porphyra yezoensis</name>
    <dbReference type="NCBI Taxonomy" id="2788"/>
    <lineage>
        <taxon>Eukaryota</taxon>
        <taxon>Rhodophyta</taxon>
        <taxon>Bangiophyceae</taxon>
        <taxon>Bangiales</taxon>
        <taxon>Bangiaceae</taxon>
        <taxon>Pyropia</taxon>
    </lineage>
</organism>
<dbReference type="EMBL" id="DQ995198">
    <property type="protein sequence ID" value="ABJ91313.1"/>
    <property type="molecule type" value="Genomic_DNA"/>
</dbReference>
<dbReference type="EMBL" id="AP006715">
    <property type="protein sequence ID" value="BAE92425.1"/>
    <property type="molecule type" value="Genomic_DNA"/>
</dbReference>
<dbReference type="RefSeq" id="YP_536982.1">
    <property type="nucleotide sequence ID" value="NC_007932.1"/>
</dbReference>
<dbReference type="SMR" id="Q1XDI6"/>
<dbReference type="GeneID" id="3978925"/>
<dbReference type="GO" id="GO:0009507">
    <property type="term" value="C:chloroplast"/>
    <property type="evidence" value="ECO:0007669"/>
    <property type="project" value="UniProtKB-SubCell"/>
</dbReference>
<dbReference type="GO" id="GO:1990904">
    <property type="term" value="C:ribonucleoprotein complex"/>
    <property type="evidence" value="ECO:0007669"/>
    <property type="project" value="UniProtKB-KW"/>
</dbReference>
<dbReference type="GO" id="GO:0005840">
    <property type="term" value="C:ribosome"/>
    <property type="evidence" value="ECO:0007669"/>
    <property type="project" value="UniProtKB-KW"/>
</dbReference>
<dbReference type="GO" id="GO:0019843">
    <property type="term" value="F:rRNA binding"/>
    <property type="evidence" value="ECO:0007669"/>
    <property type="project" value="UniProtKB-UniRule"/>
</dbReference>
<dbReference type="GO" id="GO:0003735">
    <property type="term" value="F:structural constituent of ribosome"/>
    <property type="evidence" value="ECO:0007669"/>
    <property type="project" value="InterPro"/>
</dbReference>
<dbReference type="GO" id="GO:0006412">
    <property type="term" value="P:translation"/>
    <property type="evidence" value="ECO:0007669"/>
    <property type="project" value="UniProtKB-UniRule"/>
</dbReference>
<dbReference type="FunFam" id="3.30.1440.10:FF:000001">
    <property type="entry name" value="50S ribosomal protein L5"/>
    <property type="match status" value="1"/>
</dbReference>
<dbReference type="Gene3D" id="3.30.1440.10">
    <property type="match status" value="1"/>
</dbReference>
<dbReference type="HAMAP" id="MF_01333_B">
    <property type="entry name" value="Ribosomal_uL5_B"/>
    <property type="match status" value="1"/>
</dbReference>
<dbReference type="InterPro" id="IPR002132">
    <property type="entry name" value="Ribosomal_uL5"/>
</dbReference>
<dbReference type="InterPro" id="IPR020930">
    <property type="entry name" value="Ribosomal_uL5_bac-type"/>
</dbReference>
<dbReference type="InterPro" id="IPR031309">
    <property type="entry name" value="Ribosomal_uL5_C"/>
</dbReference>
<dbReference type="InterPro" id="IPR020929">
    <property type="entry name" value="Ribosomal_uL5_CS"/>
</dbReference>
<dbReference type="InterPro" id="IPR022803">
    <property type="entry name" value="Ribosomal_uL5_dom_sf"/>
</dbReference>
<dbReference type="InterPro" id="IPR031310">
    <property type="entry name" value="Ribosomal_uL5_N"/>
</dbReference>
<dbReference type="NCBIfam" id="NF000585">
    <property type="entry name" value="PRK00010.1"/>
    <property type="match status" value="1"/>
</dbReference>
<dbReference type="PANTHER" id="PTHR11994">
    <property type="entry name" value="60S RIBOSOMAL PROTEIN L11-RELATED"/>
    <property type="match status" value="1"/>
</dbReference>
<dbReference type="Pfam" id="PF00281">
    <property type="entry name" value="Ribosomal_L5"/>
    <property type="match status" value="1"/>
</dbReference>
<dbReference type="Pfam" id="PF00673">
    <property type="entry name" value="Ribosomal_L5_C"/>
    <property type="match status" value="1"/>
</dbReference>
<dbReference type="PIRSF" id="PIRSF002161">
    <property type="entry name" value="Ribosomal_L5"/>
    <property type="match status" value="1"/>
</dbReference>
<dbReference type="SUPFAM" id="SSF55282">
    <property type="entry name" value="RL5-like"/>
    <property type="match status" value="1"/>
</dbReference>
<dbReference type="PROSITE" id="PS00358">
    <property type="entry name" value="RIBOSOMAL_L5"/>
    <property type="match status" value="1"/>
</dbReference>
<reference key="1">
    <citation type="submission" date="2006-09" db="EMBL/GenBank/DDBJ databases">
        <title>Cloning and analysis of the Porphyra yezoensis gene for rpl5.</title>
        <authorList>
            <person name="Wang M.Q."/>
            <person name="Mao Y.X."/>
        </authorList>
    </citation>
    <scope>NUCLEOTIDE SEQUENCE [GENOMIC DNA]</scope>
    <source>
        <strain>Qingdao</strain>
    </source>
</reference>
<reference key="2">
    <citation type="submission" date="2003-11" db="EMBL/GenBank/DDBJ databases">
        <title>Whole genome sequence of Porphyra yezoensis chloroplast.</title>
        <authorList>
            <person name="Kunimoto M."/>
            <person name="Morishima K."/>
            <person name="Yoshikawa M."/>
            <person name="Fukuda S."/>
            <person name="Kobayashi T."/>
            <person name="Kobayashi M."/>
            <person name="Okazaki T."/>
            <person name="Ohara I."/>
            <person name="Nakayama I."/>
        </authorList>
    </citation>
    <scope>NUCLEOTIDE SEQUENCE [LARGE SCALE GENOMIC DNA]</scope>
    <source>
        <strain>U-51</strain>
    </source>
</reference>
<feature type="chain" id="PRO_0000243094" description="Large ribosomal subunit protein uL5c">
    <location>
        <begin position="1"/>
        <end position="181"/>
    </location>
</feature>
<accession>Q1XDI6</accession>
<accession>A0MMA5</accession>
<sequence length="181" mass="20538">MAIGLKEKYKTTVTQSLKDEFQYKNVHEVPRFTKITINRGLGEASQNAKALESSIQELTLITGQKPIVTKAKKSIAGFKIREEVPIGIVVHLRKDKMYSFLEKLINLTLPRIRDFRGISPRSFDGKGNYNLGLREQLIFPEIDYDNIDQIRGLDISIVTTAKTDQEGLALLKKLGMPFRES</sequence>
<evidence type="ECO:0000250" key="1"/>
<evidence type="ECO:0000305" key="2"/>
<geneLocation type="chloroplast"/>
<comment type="function">
    <text evidence="1">Binds 5S rRNA, forms part of the central protuberance of the 50S subunit.</text>
</comment>
<comment type="subunit">
    <text evidence="1">Part of the 50S ribosomal subunit; contacts the 5S rRNA.</text>
</comment>
<comment type="subcellular location">
    <subcellularLocation>
        <location>Plastid</location>
        <location>Chloroplast</location>
    </subcellularLocation>
</comment>
<comment type="similarity">
    <text evidence="2">Belongs to the universal ribosomal protein uL5 family.</text>
</comment>